<comment type="catalytic activity">
    <reaction evidence="1">
        <text>(2R)-3-phosphoglycerate + ATP = (2R)-3-phospho-glyceroyl phosphate + ADP</text>
        <dbReference type="Rhea" id="RHEA:14801"/>
        <dbReference type="ChEBI" id="CHEBI:30616"/>
        <dbReference type="ChEBI" id="CHEBI:57604"/>
        <dbReference type="ChEBI" id="CHEBI:58272"/>
        <dbReference type="ChEBI" id="CHEBI:456216"/>
        <dbReference type="EC" id="2.7.2.3"/>
    </reaction>
</comment>
<comment type="pathway">
    <text evidence="1">Carbohydrate degradation; glycolysis; pyruvate from D-glyceraldehyde 3-phosphate: step 2/5.</text>
</comment>
<comment type="subunit">
    <text evidence="1">Monomer.</text>
</comment>
<comment type="subcellular location">
    <subcellularLocation>
        <location evidence="1">Cytoplasm</location>
    </subcellularLocation>
</comment>
<comment type="PTM">
    <text evidence="2">Phosphorylated.</text>
</comment>
<comment type="similarity">
    <text evidence="1">Belongs to the phosphoglycerate kinase family.</text>
</comment>
<name>PGK_STRR6</name>
<keyword id="KW-0067">ATP-binding</keyword>
<keyword id="KW-0963">Cytoplasm</keyword>
<keyword id="KW-0324">Glycolysis</keyword>
<keyword id="KW-0418">Kinase</keyword>
<keyword id="KW-0547">Nucleotide-binding</keyword>
<keyword id="KW-0597">Phosphoprotein</keyword>
<keyword id="KW-1185">Reference proteome</keyword>
<keyword id="KW-0808">Transferase</keyword>
<proteinExistence type="evidence at protein level"/>
<organism>
    <name type="scientific">Streptococcus pneumoniae (strain ATCC BAA-255 / R6)</name>
    <dbReference type="NCBI Taxonomy" id="171101"/>
    <lineage>
        <taxon>Bacteria</taxon>
        <taxon>Bacillati</taxon>
        <taxon>Bacillota</taxon>
        <taxon>Bacilli</taxon>
        <taxon>Lactobacillales</taxon>
        <taxon>Streptococcaceae</taxon>
        <taxon>Streptococcus</taxon>
    </lineage>
</organism>
<feature type="chain" id="PRO_0000146016" description="Phosphoglycerate kinase">
    <location>
        <begin position="1"/>
        <end position="398"/>
    </location>
</feature>
<feature type="binding site" evidence="1">
    <location>
        <begin position="21"/>
        <end position="23"/>
    </location>
    <ligand>
        <name>substrate</name>
    </ligand>
</feature>
<feature type="binding site" evidence="1">
    <location>
        <position position="36"/>
    </location>
    <ligand>
        <name>substrate</name>
    </ligand>
</feature>
<feature type="binding site" evidence="1">
    <location>
        <begin position="59"/>
        <end position="62"/>
    </location>
    <ligand>
        <name>substrate</name>
    </ligand>
</feature>
<feature type="binding site" evidence="1">
    <location>
        <position position="119"/>
    </location>
    <ligand>
        <name>substrate</name>
    </ligand>
</feature>
<feature type="binding site" evidence="1">
    <location>
        <position position="157"/>
    </location>
    <ligand>
        <name>substrate</name>
    </ligand>
</feature>
<feature type="binding site" evidence="1">
    <location>
        <position position="208"/>
    </location>
    <ligand>
        <name>ATP</name>
        <dbReference type="ChEBI" id="CHEBI:30616"/>
    </ligand>
</feature>
<feature type="binding site" evidence="1">
    <location>
        <position position="296"/>
    </location>
    <ligand>
        <name>ATP</name>
        <dbReference type="ChEBI" id="CHEBI:30616"/>
    </ligand>
</feature>
<feature type="binding site" evidence="1">
    <location>
        <position position="327"/>
    </location>
    <ligand>
        <name>ATP</name>
        <dbReference type="ChEBI" id="CHEBI:30616"/>
    </ligand>
</feature>
<feature type="binding site" evidence="1">
    <location>
        <begin position="354"/>
        <end position="357"/>
    </location>
    <ligand>
        <name>ATP</name>
        <dbReference type="ChEBI" id="CHEBI:30616"/>
    </ligand>
</feature>
<sequence>MAKLTVKDVDLKGKKVLVRVDFNVPLKDGVITNDNRITAALPTIKYIIEQGGRAILFSHLGRVKEESDKAGKSLAPVAADLAAKLGQDVVFPGVTRGAELEAAINALEDGQVLLVENTRYEDVDGKKESKNDPELGKYWASLGDGIFVNDAFGTAHRAHASNVGISANVEKAVAGFLLENEIAYIQEAVETPERPFVAILGGSKVSDKIGVIENLLEKADKVLIGGGMTYTFYKAQGIEIGNSLVEEDKLDVAKALLEKANGKLILPVDSKEANAFAGYTEVRDTEGEAVSEGFLGLDIGPKSIAKFDEALTGAKTVVWNGPMGVFENPDFQAGTIGVMDAIVKQPGVKSIIGGGDSAAAAINLGRADKFSWISTGGGASMELLEGKVLPGLAALTEK</sequence>
<dbReference type="EC" id="2.7.2.3" evidence="1"/>
<dbReference type="EMBL" id="AE007317">
    <property type="protein sequence ID" value="AAK99245.1"/>
    <property type="molecule type" value="Genomic_DNA"/>
</dbReference>
<dbReference type="PIR" id="A97927">
    <property type="entry name" value="A97927"/>
</dbReference>
<dbReference type="RefSeq" id="NP_358035.1">
    <property type="nucleotide sequence ID" value="NC_003098.1"/>
</dbReference>
<dbReference type="RefSeq" id="WP_001096759.1">
    <property type="nucleotide sequence ID" value="NC_003098.1"/>
</dbReference>
<dbReference type="SMR" id="Q8DQX8"/>
<dbReference type="STRING" id="171101.spr0441"/>
<dbReference type="MoonProt" id="Q8DQX8"/>
<dbReference type="KEGG" id="spr:spr0441"/>
<dbReference type="PATRIC" id="fig|171101.6.peg.487"/>
<dbReference type="eggNOG" id="COG0126">
    <property type="taxonomic scope" value="Bacteria"/>
</dbReference>
<dbReference type="HOGENOM" id="CLU_025427_0_1_9"/>
<dbReference type="UniPathway" id="UPA00109">
    <property type="reaction ID" value="UER00185"/>
</dbReference>
<dbReference type="Proteomes" id="UP000000586">
    <property type="component" value="Chromosome"/>
</dbReference>
<dbReference type="GO" id="GO:0005829">
    <property type="term" value="C:cytosol"/>
    <property type="evidence" value="ECO:0000318"/>
    <property type="project" value="GO_Central"/>
</dbReference>
<dbReference type="GO" id="GO:0043531">
    <property type="term" value="F:ADP binding"/>
    <property type="evidence" value="ECO:0000318"/>
    <property type="project" value="GO_Central"/>
</dbReference>
<dbReference type="GO" id="GO:0005524">
    <property type="term" value="F:ATP binding"/>
    <property type="evidence" value="ECO:0000318"/>
    <property type="project" value="GO_Central"/>
</dbReference>
<dbReference type="GO" id="GO:0004618">
    <property type="term" value="F:phosphoglycerate kinase activity"/>
    <property type="evidence" value="ECO:0000318"/>
    <property type="project" value="GO_Central"/>
</dbReference>
<dbReference type="GO" id="GO:0006094">
    <property type="term" value="P:gluconeogenesis"/>
    <property type="evidence" value="ECO:0000318"/>
    <property type="project" value="GO_Central"/>
</dbReference>
<dbReference type="GO" id="GO:0006096">
    <property type="term" value="P:glycolytic process"/>
    <property type="evidence" value="ECO:0000318"/>
    <property type="project" value="GO_Central"/>
</dbReference>
<dbReference type="FunFam" id="3.40.50.1260:FF:000001">
    <property type="entry name" value="Phosphoglycerate kinase"/>
    <property type="match status" value="1"/>
</dbReference>
<dbReference type="FunFam" id="3.40.50.1260:FF:000008">
    <property type="entry name" value="Phosphoglycerate kinase"/>
    <property type="match status" value="1"/>
</dbReference>
<dbReference type="Gene3D" id="3.40.50.1260">
    <property type="entry name" value="Phosphoglycerate kinase, N-terminal domain"/>
    <property type="match status" value="2"/>
</dbReference>
<dbReference type="HAMAP" id="MF_00145">
    <property type="entry name" value="Phosphoglyc_kinase"/>
    <property type="match status" value="1"/>
</dbReference>
<dbReference type="InterPro" id="IPR001576">
    <property type="entry name" value="Phosphoglycerate_kinase"/>
</dbReference>
<dbReference type="InterPro" id="IPR015911">
    <property type="entry name" value="Phosphoglycerate_kinase_CS"/>
</dbReference>
<dbReference type="InterPro" id="IPR015824">
    <property type="entry name" value="Phosphoglycerate_kinase_N"/>
</dbReference>
<dbReference type="InterPro" id="IPR036043">
    <property type="entry name" value="Phosphoglycerate_kinase_sf"/>
</dbReference>
<dbReference type="PANTHER" id="PTHR11406">
    <property type="entry name" value="PHOSPHOGLYCERATE KINASE"/>
    <property type="match status" value="1"/>
</dbReference>
<dbReference type="PANTHER" id="PTHR11406:SF23">
    <property type="entry name" value="PHOSPHOGLYCERATE KINASE 1, CHLOROPLASTIC-RELATED"/>
    <property type="match status" value="1"/>
</dbReference>
<dbReference type="Pfam" id="PF00162">
    <property type="entry name" value="PGK"/>
    <property type="match status" value="1"/>
</dbReference>
<dbReference type="PIRSF" id="PIRSF000724">
    <property type="entry name" value="Pgk"/>
    <property type="match status" value="1"/>
</dbReference>
<dbReference type="PRINTS" id="PR00477">
    <property type="entry name" value="PHGLYCKINASE"/>
</dbReference>
<dbReference type="SUPFAM" id="SSF53748">
    <property type="entry name" value="Phosphoglycerate kinase"/>
    <property type="match status" value="1"/>
</dbReference>
<dbReference type="PROSITE" id="PS00111">
    <property type="entry name" value="PGLYCERATE_KINASE"/>
    <property type="match status" value="1"/>
</dbReference>
<protein>
    <recommendedName>
        <fullName evidence="1">Phosphoglycerate kinase</fullName>
        <ecNumber evidence="1">2.7.2.3</ecNumber>
    </recommendedName>
</protein>
<evidence type="ECO:0000255" key="1">
    <source>
        <dbReference type="HAMAP-Rule" id="MF_00145"/>
    </source>
</evidence>
<evidence type="ECO:0000269" key="2">
    <source>
    </source>
</evidence>
<gene>
    <name evidence="1" type="primary">pgk</name>
    <name type="ordered locus">spr0441</name>
</gene>
<reference key="1">
    <citation type="journal article" date="2001" name="J. Bacteriol.">
        <title>Genome of the bacterium Streptococcus pneumoniae strain R6.</title>
        <authorList>
            <person name="Hoskins J."/>
            <person name="Alborn W.E. Jr."/>
            <person name="Arnold J."/>
            <person name="Blaszczak L.C."/>
            <person name="Burgett S."/>
            <person name="DeHoff B.S."/>
            <person name="Estrem S.T."/>
            <person name="Fritz L."/>
            <person name="Fu D.-J."/>
            <person name="Fuller W."/>
            <person name="Geringer C."/>
            <person name="Gilmour R."/>
            <person name="Glass J.S."/>
            <person name="Khoja H."/>
            <person name="Kraft A.R."/>
            <person name="Lagace R.E."/>
            <person name="LeBlanc D.J."/>
            <person name="Lee L.N."/>
            <person name="Lefkowitz E.J."/>
            <person name="Lu J."/>
            <person name="Matsushima P."/>
            <person name="McAhren S.M."/>
            <person name="McHenney M."/>
            <person name="McLeaster K."/>
            <person name="Mundy C.W."/>
            <person name="Nicas T.I."/>
            <person name="Norris F.H."/>
            <person name="O'Gara M."/>
            <person name="Peery R.B."/>
            <person name="Robertson G.T."/>
            <person name="Rockey P."/>
            <person name="Sun P.-M."/>
            <person name="Winkler M.E."/>
            <person name="Yang Y."/>
            <person name="Young-Bellido M."/>
            <person name="Zhao G."/>
            <person name="Zook C.A."/>
            <person name="Baltz R.H."/>
            <person name="Jaskunas S.R."/>
            <person name="Rosteck P.R. Jr."/>
            <person name="Skatrud P.L."/>
            <person name="Glass J.I."/>
        </authorList>
    </citation>
    <scope>NUCLEOTIDE SEQUENCE [LARGE SCALE GENOMIC DNA]</scope>
    <source>
        <strain>ATCC BAA-255 / R6</strain>
    </source>
</reference>
<reference key="2">
    <citation type="journal article" date="2005" name="FEBS J.">
        <title>Characterization of a eukaryotic type serine/threonine protein kinase and protein phosphatase of Streptococcus pneumoniae and identification of kinase substrates.</title>
        <authorList>
            <person name="Novakova L."/>
            <person name="Saskova L."/>
            <person name="Pallova P."/>
            <person name="Janecek J."/>
            <person name="Novotna J."/>
            <person name="Ulrych A."/>
            <person name="Echenique J."/>
            <person name="Trombe M.C."/>
            <person name="Branny P."/>
        </authorList>
    </citation>
    <scope>PHOSPHORYLATION</scope>
    <scope>IDENTIFICATION BY MASS SPECTROMETRY</scope>
</reference>
<accession>Q8DQX8</accession>